<proteinExistence type="evidence at protein level"/>
<accession>P68075</accession>
<accession>P20408</accession>
<accession>P37043</accession>
<accession>P81750</accession>
<evidence type="ECO:0000269" key="1">
    <source>
    </source>
</evidence>
<evidence type="ECO:0000305" key="2"/>
<gene>
    <name type="primary">gnrh2</name>
</gene>
<name>GON2_CLUPA</name>
<keyword id="KW-0027">Amidation</keyword>
<keyword id="KW-0903">Direct protein sequencing</keyword>
<keyword id="KW-0372">Hormone</keyword>
<keyword id="KW-0873">Pyrrolidone carboxylic acid</keyword>
<keyword id="KW-0964">Secreted</keyword>
<protein>
    <recommendedName>
        <fullName>Gonadoliberin-2</fullName>
    </recommendedName>
    <alternativeName>
        <fullName>Gonadoliberin II</fullName>
    </alternativeName>
    <alternativeName>
        <fullName>Gonadotropin-releasing hormone II</fullName>
        <shortName>GnRH-II</shortName>
    </alternativeName>
    <alternativeName>
        <fullName>Luliberin II</fullName>
    </alternativeName>
    <alternativeName>
        <fullName>Luteinizing hormone-releasing hormone II</fullName>
        <shortName>LH-RH II</shortName>
    </alternativeName>
</protein>
<organism>
    <name type="scientific">Clupea pallasii</name>
    <name type="common">Pacific herring</name>
    <dbReference type="NCBI Taxonomy" id="30724"/>
    <lineage>
        <taxon>Eukaryota</taxon>
        <taxon>Metazoa</taxon>
        <taxon>Chordata</taxon>
        <taxon>Craniata</taxon>
        <taxon>Vertebrata</taxon>
        <taxon>Euteleostomi</taxon>
        <taxon>Actinopterygii</taxon>
        <taxon>Neopterygii</taxon>
        <taxon>Teleostei</taxon>
        <taxon>Clupei</taxon>
        <taxon>Clupeiformes</taxon>
        <taxon>Clupeoidei</taxon>
        <taxon>Clupeidae</taxon>
        <taxon>Clupea</taxon>
    </lineage>
</organism>
<reference key="1">
    <citation type="journal article" date="1984" name="Proc. Natl. Acad. Sci. U.S.A.">
        <title>Identification of the second gonadotropin-releasing hormone in chicken hypothalamus: evidence that gonadotropin secretion is probably controlled by two distinct gonadotropin-releasing hormones in avian species.</title>
        <authorList>
            <person name="Miyamoto K."/>
            <person name="Hasegawa Y."/>
            <person name="Nomura M."/>
            <person name="Igarashi M."/>
            <person name="Kangawa K."/>
            <person name="Matsuo H."/>
        </authorList>
    </citation>
    <scope>PROTEIN SEQUENCE</scope>
    <source>
        <tissue>Hypothalamus</tissue>
    </source>
</reference>
<reference key="2">
    <citation type="journal article" date="2000" name="Endocrinology">
        <title>Primary structure and function of three gonadotropin-releasing hormones, including a novel form, from an ancient teleost, herring.</title>
        <authorList>
            <person name="Carolsfeld J."/>
            <person name="Powell J.F.F."/>
            <person name="Park M."/>
            <person name="Fischer W.H."/>
            <person name="Craig A.G."/>
            <person name="Chang J.P."/>
            <person name="Rivier J.E."/>
            <person name="Sherwood N.M."/>
        </authorList>
    </citation>
    <scope>PROTEIN SEQUENCE</scope>
    <scope>PYROGLUTAMATE FORMATION AT GLN-1</scope>
    <scope>AMIDATION AT GLY-10</scope>
    <scope>FUNCTION</scope>
    <source>
        <tissue>Brain</tissue>
        <tissue>Pituitary</tissue>
    </source>
</reference>
<comment type="function">
    <text evidence="1">Stimulates the secretion of gonadotropins.</text>
</comment>
<comment type="subcellular location">
    <subcellularLocation>
        <location>Secreted</location>
    </subcellularLocation>
</comment>
<comment type="similarity">
    <text evidence="2">Belongs to the GnRH family.</text>
</comment>
<dbReference type="GO" id="GO:0005576">
    <property type="term" value="C:extracellular region"/>
    <property type="evidence" value="ECO:0007669"/>
    <property type="project" value="UniProtKB-SubCell"/>
</dbReference>
<dbReference type="GO" id="GO:0005179">
    <property type="term" value="F:hormone activity"/>
    <property type="evidence" value="ECO:0007669"/>
    <property type="project" value="UniProtKB-KW"/>
</dbReference>
<dbReference type="InterPro" id="IPR002012">
    <property type="entry name" value="GnRH"/>
</dbReference>
<dbReference type="Pfam" id="PF00446">
    <property type="entry name" value="GnRH"/>
    <property type="match status" value="1"/>
</dbReference>
<dbReference type="PROSITE" id="PS00473">
    <property type="entry name" value="GNRH"/>
    <property type="match status" value="1"/>
</dbReference>
<feature type="peptide" id="PRO_0000043951" description="Gonadoliberin-2">
    <location>
        <begin position="1"/>
        <end position="10"/>
    </location>
</feature>
<feature type="modified residue" description="Pyrrolidone carboxylic acid" evidence="1">
    <location>
        <position position="1"/>
    </location>
</feature>
<feature type="modified residue" description="Glycine amide" evidence="1">
    <location>
        <position position="10"/>
    </location>
</feature>
<sequence length="10" mass="1254">QHWSHGWYPG</sequence>